<feature type="signal peptide" evidence="1">
    <location>
        <begin position="1"/>
        <end position="25"/>
    </location>
</feature>
<feature type="chain" id="PRO_0000037446" description="Early glycoprotein GP48">
    <location>
        <begin position="26"/>
        <end position="152"/>
    </location>
</feature>
<feature type="glycosylation site" description="N-linked (GlcNAc...) asparagine; by host" evidence="1">
    <location>
        <position position="48"/>
    </location>
</feature>
<feature type="glycosylation site" description="N-linked (GlcNAc...) asparagine; by host" evidence="1">
    <location>
        <position position="53"/>
    </location>
</feature>
<feature type="glycosylation site" description="N-linked (GlcNAc...) asparagine; by host" evidence="1">
    <location>
        <position position="61"/>
    </location>
</feature>
<feature type="glycosylation site" description="N-linked (GlcNAc...) asparagine; by host" evidence="1">
    <location>
        <position position="69"/>
    </location>
</feature>
<feature type="glycosylation site" description="N-linked (GlcNAc...) asparagine; by host" evidence="1">
    <location>
        <position position="108"/>
    </location>
</feature>
<feature type="glycosylation site" description="N-linked (GlcNAc...) asparagine; by host" evidence="1">
    <location>
        <position position="112"/>
    </location>
</feature>
<feature type="glycosylation site" description="N-linked (GlcNAc...) asparagine; by host" evidence="1">
    <location>
        <position position="122"/>
    </location>
</feature>
<feature type="glycosylation site" description="N-linked (GlcNAc...) asparagine; by host" evidence="1">
    <location>
        <position position="139"/>
    </location>
</feature>
<feature type="glycosylation site" description="N-linked (GlcNAc...) asparagine; by host" evidence="1">
    <location>
        <position position="148"/>
    </location>
</feature>
<accession>P17146</accession>
<accession>Q7M6P4</accession>
<keyword id="KW-0244">Early protein</keyword>
<keyword id="KW-0325">Glycoprotein</keyword>
<keyword id="KW-0472">Membrane</keyword>
<keyword id="KW-1185">Reference proteome</keyword>
<keyword id="KW-0732">Signal</keyword>
<keyword id="KW-0946">Virion</keyword>
<dbReference type="EMBL" id="X17403">
    <property type="protein sequence ID" value="CAA35437.1"/>
    <property type="molecule type" value="Genomic_DNA"/>
</dbReference>
<dbReference type="EMBL" id="BK000394">
    <property type="protein sequence ID" value="DAA00144.1"/>
    <property type="molecule type" value="Genomic_DNA"/>
</dbReference>
<dbReference type="PIR" id="S09767">
    <property type="entry name" value="VGBEY9"/>
</dbReference>
<dbReference type="GlyCosmos" id="P17146">
    <property type="glycosylation" value="9 sites, No reported glycans"/>
</dbReference>
<dbReference type="Proteomes" id="UP000008991">
    <property type="component" value="Segment"/>
</dbReference>
<dbReference type="Proteomes" id="UP000008992">
    <property type="component" value="Segment"/>
</dbReference>
<dbReference type="GO" id="GO:0016020">
    <property type="term" value="C:membrane"/>
    <property type="evidence" value="ECO:0007669"/>
    <property type="project" value="UniProtKB-KW"/>
</dbReference>
<dbReference type="GO" id="GO:0055036">
    <property type="term" value="C:virion membrane"/>
    <property type="evidence" value="ECO:0007669"/>
    <property type="project" value="UniProtKB-SubCell"/>
</dbReference>
<sequence>MVMMLRTWRLLPMVLLAAYCYCVFGTCSIGTTTAPVEWKSPDRQIPKNITCANYSGTINGNVTFRGLQNKTEDFLHWLLGWGHKSICSFFPKLQGNYNEQHYRYEVANLTYNCTYNRLTLLNLTTENSGKYYFKREDANFTFYYSCYNLTVS</sequence>
<proteinExistence type="inferred from homology"/>
<gene>
    <name type="primary">UL4</name>
</gene>
<organismHost>
    <name type="scientific">Homo sapiens</name>
    <name type="common">Human</name>
    <dbReference type="NCBI Taxonomy" id="9606"/>
</organismHost>
<comment type="subcellular location">
    <subcellularLocation>
        <location evidence="2">Virion membrane</location>
        <topology evidence="2">Peripheral membrane protein</topology>
    </subcellularLocation>
</comment>
<comment type="PTM">
    <text>N-glycosylated and possibly O-glycosylated.</text>
</comment>
<comment type="similarity">
    <text evidence="2">Belongs to the RL11 family.</text>
</comment>
<protein>
    <recommendedName>
        <fullName>Early glycoprotein GP48</fullName>
    </recommendedName>
</protein>
<organism>
    <name type="scientific">Human cytomegalovirus (strain AD169)</name>
    <name type="common">HHV-5</name>
    <name type="synonym">Human herpesvirus 5</name>
    <dbReference type="NCBI Taxonomy" id="10360"/>
    <lineage>
        <taxon>Viruses</taxon>
        <taxon>Duplodnaviria</taxon>
        <taxon>Heunggongvirae</taxon>
        <taxon>Peploviricota</taxon>
        <taxon>Herviviricetes</taxon>
        <taxon>Herpesvirales</taxon>
        <taxon>Orthoherpesviridae</taxon>
        <taxon>Betaherpesvirinae</taxon>
        <taxon>Cytomegalovirus</taxon>
        <taxon>Cytomegalovirus humanbeta5</taxon>
        <taxon>Human cytomegalovirus</taxon>
    </lineage>
</organism>
<reference key="1">
    <citation type="journal article" date="1990" name="Curr. Top. Microbiol. Immunol.">
        <title>Analysis of the protein-coding content of the sequence of human cytomegalovirus strain AD169.</title>
        <authorList>
            <person name="Chee M.S."/>
            <person name="Bankier A.T."/>
            <person name="Beck S."/>
            <person name="Bohni R."/>
            <person name="Brown C.M."/>
            <person name="Cerny R."/>
            <person name="Horsnell T."/>
            <person name="Hutchison C.A. III"/>
            <person name="Kouzarides T."/>
            <person name="Martignetti J.A."/>
            <person name="Preddie E."/>
            <person name="Satchwell S.C."/>
            <person name="Tomlinson P."/>
            <person name="Weston K.M."/>
            <person name="Barrell B.G."/>
        </authorList>
    </citation>
    <scope>NUCLEOTIDE SEQUENCE [LARGE SCALE GENOMIC DNA]</scope>
</reference>
<reference key="2">
    <citation type="journal article" date="2003" name="J. Gen. Virol.">
        <title>The human cytomegalovirus genome revisited: comparison with the chimpanzee cytomegalovirus genome.</title>
        <authorList>
            <person name="Davison A.J."/>
            <person name="Dolan A."/>
            <person name="Akter P."/>
            <person name="Addison C."/>
            <person name="Dargan D.J."/>
            <person name="Alcendor D.J."/>
            <person name="McGeoch D.J."/>
            <person name="Hayward G.S."/>
        </authorList>
    </citation>
    <scope>GENOME REANNOTATION</scope>
</reference>
<reference key="3">
    <citation type="journal article" date="2003" name="J. Gen. Virol.">
        <authorList>
            <person name="Davison A.J."/>
            <person name="Dolan A."/>
            <person name="Akter P."/>
            <person name="Addison C."/>
            <person name="Dargan D.J."/>
            <person name="Alcendor D.J."/>
            <person name="McGeoch D.J."/>
            <person name="Hayward G.S."/>
        </authorList>
    </citation>
    <scope>ERRATUM OF PUBMED:12533697</scope>
</reference>
<name>UL04_HCMVA</name>
<evidence type="ECO:0000255" key="1"/>
<evidence type="ECO:0000305" key="2"/>